<accession>Q7PC79</accession>
<accession>Q7XAC4</accession>
<accession>Q9CAH2</accession>
<proteinExistence type="evidence at transcript level"/>
<feature type="chain" id="PRO_0000415612" description="Exportin-T">
    <location>
        <begin position="1"/>
        <end position="988"/>
    </location>
</feature>
<feature type="sequence conflict" description="In Ref. 1; AAP37047." evidence="5" ref="1">
    <original>Q</original>
    <variation>K</variation>
    <location>
        <position position="78"/>
    </location>
</feature>
<feature type="sequence conflict" description="In Ref. 1; AAP37047." evidence="5" ref="1">
    <original>V</original>
    <variation>G</variation>
    <location>
        <position position="213"/>
    </location>
</feature>
<feature type="sequence conflict" description="In Ref. 1; AAP37047." evidence="5" ref="1">
    <original>T</original>
    <variation>S</variation>
    <location>
        <position position="594"/>
    </location>
</feature>
<dbReference type="EMBL" id="AY288073">
    <property type="protein sequence ID" value="AAP37047.1"/>
    <property type="molecule type" value="mRNA"/>
</dbReference>
<dbReference type="EMBL" id="BK001280">
    <property type="protein sequence ID" value="DAA01277.1"/>
    <property type="molecule type" value="Genomic_DNA"/>
</dbReference>
<dbReference type="EMBL" id="AC010926">
    <property type="protein sequence ID" value="AAG51863.1"/>
    <property type="status" value="ALT_SEQ"/>
    <property type="molecule type" value="Genomic_DNA"/>
</dbReference>
<dbReference type="EMBL" id="CP002684">
    <property type="protein sequence ID" value="AEE35340.1"/>
    <property type="molecule type" value="Genomic_DNA"/>
</dbReference>
<dbReference type="EMBL" id="CP002684">
    <property type="protein sequence ID" value="AEE35341.1"/>
    <property type="molecule type" value="Genomic_DNA"/>
</dbReference>
<dbReference type="EMBL" id="CP002684">
    <property type="protein sequence ID" value="AEE35342.1"/>
    <property type="molecule type" value="Genomic_DNA"/>
</dbReference>
<dbReference type="EMBL" id="CP002684">
    <property type="protein sequence ID" value="ANM59601.1"/>
    <property type="molecule type" value="Genomic_DNA"/>
</dbReference>
<dbReference type="EMBL" id="CP002684">
    <property type="protein sequence ID" value="ANM59602.1"/>
    <property type="molecule type" value="Genomic_DNA"/>
</dbReference>
<dbReference type="EMBL" id="CP002684">
    <property type="protein sequence ID" value="ANM59603.1"/>
    <property type="molecule type" value="Genomic_DNA"/>
</dbReference>
<dbReference type="EMBL" id="CP002684">
    <property type="protein sequence ID" value="ANM59604.1"/>
    <property type="molecule type" value="Genomic_DNA"/>
</dbReference>
<dbReference type="PIR" id="A96750">
    <property type="entry name" value="A96750"/>
</dbReference>
<dbReference type="RefSeq" id="NP_001077813.1">
    <property type="nucleotide sequence ID" value="NM_001084344.1"/>
</dbReference>
<dbReference type="RefSeq" id="NP_001185383.1">
    <property type="nucleotide sequence ID" value="NM_001198454.2"/>
</dbReference>
<dbReference type="RefSeq" id="NP_001321946.1">
    <property type="nucleotide sequence ID" value="NM_001334539.1"/>
</dbReference>
<dbReference type="RefSeq" id="NP_001321947.1">
    <property type="nucleotide sequence ID" value="NM_001334541.1"/>
</dbReference>
<dbReference type="RefSeq" id="NP_001321948.1">
    <property type="nucleotide sequence ID" value="NM_001334542.1"/>
</dbReference>
<dbReference type="RefSeq" id="NP_001321949.1">
    <property type="nucleotide sequence ID" value="NM_001334540.1"/>
</dbReference>
<dbReference type="RefSeq" id="NP_177400.2">
    <property type="nucleotide sequence ID" value="NM_105915.4"/>
</dbReference>
<dbReference type="SMR" id="Q7PC79"/>
<dbReference type="FunCoup" id="Q7PC79">
    <property type="interactions" value="4231"/>
</dbReference>
<dbReference type="IntAct" id="Q7PC79">
    <property type="interactions" value="1"/>
</dbReference>
<dbReference type="STRING" id="3702.Q7PC79"/>
<dbReference type="PaxDb" id="3702-AT1G72560.3"/>
<dbReference type="ProteomicsDB" id="242493"/>
<dbReference type="EnsemblPlants" id="AT1G72560.1">
    <property type="protein sequence ID" value="AT1G72560.1"/>
    <property type="gene ID" value="AT1G72560"/>
</dbReference>
<dbReference type="EnsemblPlants" id="AT1G72560.2">
    <property type="protein sequence ID" value="AT1G72560.2"/>
    <property type="gene ID" value="AT1G72560"/>
</dbReference>
<dbReference type="EnsemblPlants" id="AT1G72560.3">
    <property type="protein sequence ID" value="AT1G72560.3"/>
    <property type="gene ID" value="AT1G72560"/>
</dbReference>
<dbReference type="EnsemblPlants" id="AT1G72560.4">
    <property type="protein sequence ID" value="AT1G72560.4"/>
    <property type="gene ID" value="AT1G72560"/>
</dbReference>
<dbReference type="EnsemblPlants" id="AT1G72560.5">
    <property type="protein sequence ID" value="AT1G72560.5"/>
    <property type="gene ID" value="AT1G72560"/>
</dbReference>
<dbReference type="EnsemblPlants" id="AT1G72560.6">
    <property type="protein sequence ID" value="AT1G72560.6"/>
    <property type="gene ID" value="AT1G72560"/>
</dbReference>
<dbReference type="EnsemblPlants" id="AT1G72560.7">
    <property type="protein sequence ID" value="AT1G72560.7"/>
    <property type="gene ID" value="AT1G72560"/>
</dbReference>
<dbReference type="GeneID" id="843588"/>
<dbReference type="Gramene" id="AT1G72560.1">
    <property type="protein sequence ID" value="AT1G72560.1"/>
    <property type="gene ID" value="AT1G72560"/>
</dbReference>
<dbReference type="Gramene" id="AT1G72560.2">
    <property type="protein sequence ID" value="AT1G72560.2"/>
    <property type="gene ID" value="AT1G72560"/>
</dbReference>
<dbReference type="Gramene" id="AT1G72560.3">
    <property type="protein sequence ID" value="AT1G72560.3"/>
    <property type="gene ID" value="AT1G72560"/>
</dbReference>
<dbReference type="Gramene" id="AT1G72560.4">
    <property type="protein sequence ID" value="AT1G72560.4"/>
    <property type="gene ID" value="AT1G72560"/>
</dbReference>
<dbReference type="Gramene" id="AT1G72560.5">
    <property type="protein sequence ID" value="AT1G72560.5"/>
    <property type="gene ID" value="AT1G72560"/>
</dbReference>
<dbReference type="Gramene" id="AT1G72560.6">
    <property type="protein sequence ID" value="AT1G72560.6"/>
    <property type="gene ID" value="AT1G72560"/>
</dbReference>
<dbReference type="Gramene" id="AT1G72560.7">
    <property type="protein sequence ID" value="AT1G72560.7"/>
    <property type="gene ID" value="AT1G72560"/>
</dbReference>
<dbReference type="KEGG" id="ath:AT1G72560"/>
<dbReference type="Araport" id="AT1G72560"/>
<dbReference type="TAIR" id="AT1G72560">
    <property type="gene designation" value="PSD"/>
</dbReference>
<dbReference type="eggNOG" id="KOG2021">
    <property type="taxonomic scope" value="Eukaryota"/>
</dbReference>
<dbReference type="HOGENOM" id="CLU_004414_1_1_1"/>
<dbReference type="InParanoid" id="Q7PC79"/>
<dbReference type="OMA" id="HEMFLFG"/>
<dbReference type="PhylomeDB" id="Q7PC79"/>
<dbReference type="PRO" id="PR:Q7PC79"/>
<dbReference type="Proteomes" id="UP000006548">
    <property type="component" value="Chromosome 1"/>
</dbReference>
<dbReference type="ExpressionAtlas" id="Q7PC79">
    <property type="expression patterns" value="baseline and differential"/>
</dbReference>
<dbReference type="GO" id="GO:0005737">
    <property type="term" value="C:cytoplasm"/>
    <property type="evidence" value="ECO:0007669"/>
    <property type="project" value="UniProtKB-SubCell"/>
</dbReference>
<dbReference type="GO" id="GO:0005634">
    <property type="term" value="C:nucleus"/>
    <property type="evidence" value="ECO:0007669"/>
    <property type="project" value="UniProtKB-SubCell"/>
</dbReference>
<dbReference type="GO" id="GO:0005049">
    <property type="term" value="F:nuclear export signal receptor activity"/>
    <property type="evidence" value="ECO:0000316"/>
    <property type="project" value="TAIR"/>
</dbReference>
<dbReference type="GO" id="GO:0031267">
    <property type="term" value="F:small GTPase binding"/>
    <property type="evidence" value="ECO:0007669"/>
    <property type="project" value="InterPro"/>
</dbReference>
<dbReference type="GO" id="GO:0000049">
    <property type="term" value="F:tRNA binding"/>
    <property type="evidence" value="ECO:0007669"/>
    <property type="project" value="UniProtKB-KW"/>
</dbReference>
<dbReference type="GO" id="GO:0009908">
    <property type="term" value="P:flower development"/>
    <property type="evidence" value="ECO:0000315"/>
    <property type="project" value="TAIR"/>
</dbReference>
<dbReference type="GO" id="GO:0010014">
    <property type="term" value="P:meristem initiation"/>
    <property type="evidence" value="ECO:0000315"/>
    <property type="project" value="TAIR"/>
</dbReference>
<dbReference type="GO" id="GO:0006409">
    <property type="term" value="P:tRNA export from nucleus"/>
    <property type="evidence" value="ECO:0000316"/>
    <property type="project" value="TAIR"/>
</dbReference>
<dbReference type="GO" id="GO:0008033">
    <property type="term" value="P:tRNA processing"/>
    <property type="evidence" value="ECO:0007669"/>
    <property type="project" value="UniProtKB-KW"/>
</dbReference>
<dbReference type="GO" id="GO:0071528">
    <property type="term" value="P:tRNA re-export from nucleus"/>
    <property type="evidence" value="ECO:0007669"/>
    <property type="project" value="InterPro"/>
</dbReference>
<dbReference type="FunFam" id="1.25.10.10:FF:000295">
    <property type="entry name" value="Exportin-T"/>
    <property type="match status" value="1"/>
</dbReference>
<dbReference type="Gene3D" id="1.25.10.10">
    <property type="entry name" value="Leucine-rich Repeat Variant"/>
    <property type="match status" value="1"/>
</dbReference>
<dbReference type="InterPro" id="IPR011989">
    <property type="entry name" value="ARM-like"/>
</dbReference>
<dbReference type="InterPro" id="IPR016024">
    <property type="entry name" value="ARM-type_fold"/>
</dbReference>
<dbReference type="InterPro" id="IPR013598">
    <property type="entry name" value="Exportin-1/Importin-b-like"/>
</dbReference>
<dbReference type="InterPro" id="IPR045546">
    <property type="entry name" value="Exportin-T_C"/>
</dbReference>
<dbReference type="InterPro" id="IPR040017">
    <property type="entry name" value="XPOT"/>
</dbReference>
<dbReference type="PANTHER" id="PTHR15952:SF11">
    <property type="entry name" value="EXPORTIN-T"/>
    <property type="match status" value="1"/>
</dbReference>
<dbReference type="PANTHER" id="PTHR15952">
    <property type="entry name" value="EXPORTIN-T/LOS1"/>
    <property type="match status" value="1"/>
</dbReference>
<dbReference type="Pfam" id="PF19282">
    <property type="entry name" value="Exportin-T"/>
    <property type="match status" value="1"/>
</dbReference>
<dbReference type="Pfam" id="PF08389">
    <property type="entry name" value="Xpo1"/>
    <property type="match status" value="1"/>
</dbReference>
<dbReference type="SUPFAM" id="SSF48371">
    <property type="entry name" value="ARM repeat"/>
    <property type="match status" value="1"/>
</dbReference>
<evidence type="ECO:0000250" key="1"/>
<evidence type="ECO:0000269" key="2">
    <source>
    </source>
</evidence>
<evidence type="ECO:0000269" key="3">
    <source>
    </source>
</evidence>
<evidence type="ECO:0000269" key="4">
    <source>
    </source>
</evidence>
<evidence type="ECO:0000305" key="5"/>
<keyword id="KW-0963">Cytoplasm</keyword>
<keyword id="KW-0539">Nucleus</keyword>
<keyword id="KW-0675">Receptor</keyword>
<keyword id="KW-1185">Reference proteome</keyword>
<keyword id="KW-0694">RNA-binding</keyword>
<keyword id="KW-0813">Transport</keyword>
<keyword id="KW-0819">tRNA processing</keyword>
<keyword id="KW-0820">tRNA-binding</keyword>
<protein>
    <recommendedName>
        <fullName>Exportin-T</fullName>
    </recommendedName>
    <alternativeName>
        <fullName>Exportin(tRNA)</fullName>
    </alternativeName>
    <alternativeName>
        <fullName>Protein PAUSED</fullName>
    </alternativeName>
    <alternativeName>
        <fullName>tRNA exportin</fullName>
    </alternativeName>
</protein>
<comment type="function">
    <text evidence="2 3 4">Probable tRNA nucleus export receptor which regulates tRNA processing and facilitates tRNA translocation across the nuclear pore complex. Is required for proper activity of the shoot apical meristem (SAM) and correct leaf initiation at different developmental stages, and may play a role in floral patterning.</text>
</comment>
<comment type="subcellular location">
    <subcellularLocation>
        <location evidence="1">Nucleus</location>
    </subcellularLocation>
    <subcellularLocation>
        <location evidence="1">Cytoplasm</location>
    </subcellularLocation>
    <text evidence="1">Shuttles between the nucleus and the cytoplasm.</text>
</comment>
<comment type="tissue specificity">
    <text evidence="2">Expressed in young leaves, growing leaf blades, young floral organs and root tips.</text>
</comment>
<comment type="disruption phenotype">
    <text evidence="2 3">Delayed leaf formation during vegetative development, abnormal SAM layered structure, altered inflorescences, disrupted phyllotaxy, reduced number of seeds and reduced number of lateral roots.</text>
</comment>
<comment type="similarity">
    <text evidence="5">Belongs to the exportin family.</text>
</comment>
<comment type="sequence caution" evidence="5">
    <conflict type="erroneous gene model prediction">
        <sequence resource="EMBL-CDS" id="AAG51863"/>
    </conflict>
</comment>
<name>XPOT_ARATH</name>
<reference key="1">
    <citation type="journal article" date="2003" name="Plant Physiol.">
        <title>PAUSED, a putative exportin-t, acts pleiotropically in Arabidopsis development but is dispensable for viability.</title>
        <authorList>
            <person name="Li J."/>
            <person name="Chen X."/>
        </authorList>
    </citation>
    <scope>NUCLEOTIDE SEQUENCE [MRNA]</scope>
    <scope>FUNCTION</scope>
    <scope>TISSUE SPECIFICITY</scope>
    <scope>DISRUPTION PHENOTYPE</scope>
    <source>
        <strain>cv. Landsberg erecta</strain>
    </source>
</reference>
<reference key="2">
    <citation type="journal article" date="2003" name="Plant Physiol.">
        <title>PAUSED encodes the Arabidopsis exportin-t ortholog.</title>
        <authorList>
            <person name="Hunter C.A."/>
            <person name="Aukerman M.J."/>
            <person name="Sun H."/>
            <person name="Fokina M."/>
            <person name="Poethig R.S."/>
        </authorList>
    </citation>
    <scope>NUCLEOTIDE SEQUENCE [GENOMIC DNA]</scope>
    <scope>FUNCTION</scope>
    <scope>DISRUPTION PHENOTYPE</scope>
    <source>
        <strain>cv. Columbia</strain>
    </source>
</reference>
<reference key="3">
    <citation type="journal article" date="2000" name="Nature">
        <title>Sequence and analysis of chromosome 1 of the plant Arabidopsis thaliana.</title>
        <authorList>
            <person name="Theologis A."/>
            <person name="Ecker J.R."/>
            <person name="Palm C.J."/>
            <person name="Federspiel N.A."/>
            <person name="Kaul S."/>
            <person name="White O."/>
            <person name="Alonso J."/>
            <person name="Altafi H."/>
            <person name="Araujo R."/>
            <person name="Bowman C.L."/>
            <person name="Brooks S.Y."/>
            <person name="Buehler E."/>
            <person name="Chan A."/>
            <person name="Chao Q."/>
            <person name="Chen H."/>
            <person name="Cheuk R.F."/>
            <person name="Chin C.W."/>
            <person name="Chung M.K."/>
            <person name="Conn L."/>
            <person name="Conway A.B."/>
            <person name="Conway A.R."/>
            <person name="Creasy T.H."/>
            <person name="Dewar K."/>
            <person name="Dunn P."/>
            <person name="Etgu P."/>
            <person name="Feldblyum T.V."/>
            <person name="Feng J.-D."/>
            <person name="Fong B."/>
            <person name="Fujii C.Y."/>
            <person name="Gill J.E."/>
            <person name="Goldsmith A.D."/>
            <person name="Haas B."/>
            <person name="Hansen N.F."/>
            <person name="Hughes B."/>
            <person name="Huizar L."/>
            <person name="Hunter J.L."/>
            <person name="Jenkins J."/>
            <person name="Johnson-Hopson C."/>
            <person name="Khan S."/>
            <person name="Khaykin E."/>
            <person name="Kim C.J."/>
            <person name="Koo H.L."/>
            <person name="Kremenetskaia I."/>
            <person name="Kurtz D.B."/>
            <person name="Kwan A."/>
            <person name="Lam B."/>
            <person name="Langin-Hooper S."/>
            <person name="Lee A."/>
            <person name="Lee J.M."/>
            <person name="Lenz C.A."/>
            <person name="Li J.H."/>
            <person name="Li Y.-P."/>
            <person name="Lin X."/>
            <person name="Liu S.X."/>
            <person name="Liu Z.A."/>
            <person name="Luros J.S."/>
            <person name="Maiti R."/>
            <person name="Marziali A."/>
            <person name="Militscher J."/>
            <person name="Miranda M."/>
            <person name="Nguyen M."/>
            <person name="Nierman W.C."/>
            <person name="Osborne B.I."/>
            <person name="Pai G."/>
            <person name="Peterson J."/>
            <person name="Pham P.K."/>
            <person name="Rizzo M."/>
            <person name="Rooney T."/>
            <person name="Rowley D."/>
            <person name="Sakano H."/>
            <person name="Salzberg S.L."/>
            <person name="Schwartz J.R."/>
            <person name="Shinn P."/>
            <person name="Southwick A.M."/>
            <person name="Sun H."/>
            <person name="Tallon L.J."/>
            <person name="Tambunga G."/>
            <person name="Toriumi M.J."/>
            <person name="Town C.D."/>
            <person name="Utterback T."/>
            <person name="Van Aken S."/>
            <person name="Vaysberg M."/>
            <person name="Vysotskaia V.S."/>
            <person name="Walker M."/>
            <person name="Wu D."/>
            <person name="Yu G."/>
            <person name="Fraser C.M."/>
            <person name="Venter J.C."/>
            <person name="Davis R.W."/>
        </authorList>
    </citation>
    <scope>NUCLEOTIDE SEQUENCE [LARGE SCALE GENOMIC DNA]</scope>
    <source>
        <strain>cv. Columbia</strain>
    </source>
</reference>
<reference key="4">
    <citation type="journal article" date="2017" name="Plant J.">
        <title>Araport11: a complete reannotation of the Arabidopsis thaliana reference genome.</title>
        <authorList>
            <person name="Cheng C.Y."/>
            <person name="Krishnakumar V."/>
            <person name="Chan A.P."/>
            <person name="Thibaud-Nissen F."/>
            <person name="Schobel S."/>
            <person name="Town C.D."/>
        </authorList>
    </citation>
    <scope>GENOME REANNOTATION</scope>
    <source>
        <strain>cv. Columbia</strain>
    </source>
</reference>
<reference key="5">
    <citation type="journal article" date="2005" name="Proc. Natl. Acad. Sci. U.S.A.">
        <title>Nuclear processing and export of microRNAs in Arabidopsis.</title>
        <authorList>
            <person name="Park M.Y."/>
            <person name="Wu G."/>
            <person name="Gonzalez-Sulser A."/>
            <person name="Vaucheret H."/>
            <person name="Poethig R.S."/>
        </authorList>
    </citation>
    <scope>FUNCTION</scope>
</reference>
<sequence length="988" mass="111462">MDDLEQAIVISFETGAVDSALKSQAVTYCQQIKETPSICSICIEKLWFSKLVQVQFWCLQTLQDVLRVKYGSMSLDEQSYVRKSVFSMACLEVIDNENAGRVVEGPPFVKNKLAQVLATLIYYEYPLIWSSVFLDFMLHLCKGAVVIDMFCRVLNALDDELISLDYPRTPEEISVAARVKDAMRQQCVPQIARAWYDIVSMYKNSDPDLSATVLDCMRRFVSWIDIGLVANDAFVPLLFELILSDGLSEQVRGAAAGCVLAMVSKRMDPQSKLPLLQTLQISRVFGLVSGDVDSDLVSKVSALLTGYAVEVLECHKRLNSEDTKAVSMDLLNEVLPSVFYVMQKCEVDSTFSIVQFLLGYVSTLKGLPALKEKQLLHITQILEVIRIQICYDPMYRNNLNSLDKTGLEEEDRMSEFRKDLFVLLRTVGRVAPEVTQHFIRNSLANAVESSSESNVEEVEAALSLLYSFGESMTEEAMKTGSGCLSELIPMLLTTQFPGHSHRLVALVYLENITRYMKFIQENSQYIPNVLGAFLDDRGLHHQNFYVSRRAGYLFMRVVKLLKSKLVPFIDKILQNLQDTLSQLTTMNFASRELTGTEDGSHIFEAIGIIIGLEDVPAEKQSDYLSLLLTPLCQQIEAGLVQAKVASSEDFPVKIANIQFAIVAINALSKGFNERLVTASRPGIGLMFKQTLDVLLRVLIEFPKVEPLRSKVTSFIHRMVDTLGSAVFPYLPKALEQLLADSEPKEMVGFMVLLNQLICKFNSALHDILEEVYPVVAVRIFNVIPRDGLPSRPGAVTEEMRELIELQRMLYTFLHVIATHDLSSVFLTPKSRAYLDPMMQLVLNTSCNHKDITVRKACVQIFIKLIKDWCAEPYSEEKVPGFQNFVIEAFATNCCLYSVLDKSFNFSDANTHALFGEIITAQKVMYEKFGNTFLMHLMSKSFPSAHIPQDLAEQYCQKLQGNDIRSLKSYYQSLIENLRLQQNGSHVFR</sequence>
<organism>
    <name type="scientific">Arabidopsis thaliana</name>
    <name type="common">Mouse-ear cress</name>
    <dbReference type="NCBI Taxonomy" id="3702"/>
    <lineage>
        <taxon>Eukaryota</taxon>
        <taxon>Viridiplantae</taxon>
        <taxon>Streptophyta</taxon>
        <taxon>Embryophyta</taxon>
        <taxon>Tracheophyta</taxon>
        <taxon>Spermatophyta</taxon>
        <taxon>Magnoliopsida</taxon>
        <taxon>eudicotyledons</taxon>
        <taxon>Gunneridae</taxon>
        <taxon>Pentapetalae</taxon>
        <taxon>rosids</taxon>
        <taxon>malvids</taxon>
        <taxon>Brassicales</taxon>
        <taxon>Brassicaceae</taxon>
        <taxon>Camelineae</taxon>
        <taxon>Arabidopsis</taxon>
    </lineage>
</organism>
<gene>
    <name type="primary">PSD</name>
    <name type="ordered locus">At1g72560</name>
    <name type="ORF">F28P22.25</name>
</gene>